<gene>
    <name type="primary">tfxB</name>
</gene>
<accession>P42724</accession>
<reference key="1">
    <citation type="journal article" date="1993" name="J. Bacteriol.">
        <title>DNA sequence and mutational analysis of genes involved in the production and resistance of the antibiotic peptide trifolitoxin.</title>
        <authorList>
            <person name="Breil B.T."/>
            <person name="Ludden P.W."/>
            <person name="Triplett E.W."/>
        </authorList>
    </citation>
    <scope>NUCLEOTIDE SEQUENCE [GENOMIC DNA]</scope>
    <source>
        <strain>T24</strain>
    </source>
</reference>
<protein>
    <recommendedName>
        <fullName>Trifolitoxin-processing protein TfxB</fullName>
    </recommendedName>
</protein>
<name>TFXB_RHILT</name>
<proteinExistence type="predicted"/>
<sequence>MDFVQRFVIDRSFHLRYYSLDAYLYRAVDQVAWDADITHNRLFWDIWSAFMQPRSLVDAVETLSDYDPDEVAAAIEGMCESGIIEPVGLKDRQFDPLTVELSHVPQAWDYHLVSSRIDWINYLDGKDVKRQDLEQMDKHLSEEAVPSNFHKAANSRPKYDLPSLVPLTAFEFNNSASVAFGHEKAPLPNELSLDIITLLLNYAAAKTDTVNMYATGEHLRKAVPSGGARHPIEFYVVVGDEIAGIEAGVYHYNVRHHRLDAIEIASTSLKALQEASSVLPRSRSKPFGFAFIHTCRFERSMFRYREPRSYRVMQFDLGHIHANEVLAAKILGLDFSETFSVPESIVESVLTLDPFIESAMSAFVVHRHENHHD</sequence>
<feature type="chain" id="PRO_0000072504" description="Trifolitoxin-processing protein TfxB">
    <location>
        <begin position="1"/>
        <end position="373"/>
    </location>
</feature>
<dbReference type="EMBL" id="L06719">
    <property type="protein sequence ID" value="AAA26364.1"/>
    <property type="molecule type" value="Genomic_DNA"/>
</dbReference>
<dbReference type="PIR" id="B47116">
    <property type="entry name" value="B47116"/>
</dbReference>
<dbReference type="SMR" id="P42724"/>
<dbReference type="GO" id="GO:0005737">
    <property type="term" value="C:cytoplasm"/>
    <property type="evidence" value="ECO:0007669"/>
    <property type="project" value="UniProtKB-SubCell"/>
</dbReference>
<dbReference type="GO" id="GO:0016491">
    <property type="term" value="F:oxidoreductase activity"/>
    <property type="evidence" value="ECO:0007669"/>
    <property type="project" value="InterPro"/>
</dbReference>
<dbReference type="CDD" id="cd02142">
    <property type="entry name" value="McbC_SagB-like_oxidoreductase"/>
    <property type="match status" value="1"/>
</dbReference>
<dbReference type="Gene3D" id="3.40.109.10">
    <property type="entry name" value="NADH Oxidase"/>
    <property type="match status" value="1"/>
</dbReference>
<dbReference type="InterPro" id="IPR052544">
    <property type="entry name" value="Bacteriocin_Proc_Enz"/>
</dbReference>
<dbReference type="InterPro" id="IPR029479">
    <property type="entry name" value="Nitroreductase"/>
</dbReference>
<dbReference type="InterPro" id="IPR000415">
    <property type="entry name" value="Nitroreductase-like"/>
</dbReference>
<dbReference type="InterPro" id="IPR020051">
    <property type="entry name" value="SagB-type_dehydrogenase"/>
</dbReference>
<dbReference type="NCBIfam" id="TIGR03605">
    <property type="entry name" value="antibiot_sagB"/>
    <property type="match status" value="1"/>
</dbReference>
<dbReference type="PANTHER" id="PTHR43745">
    <property type="entry name" value="NITROREDUCTASE MJ1384-RELATED"/>
    <property type="match status" value="1"/>
</dbReference>
<dbReference type="PANTHER" id="PTHR43745:SF2">
    <property type="entry name" value="NITROREDUCTASE MJ1384-RELATED"/>
    <property type="match status" value="1"/>
</dbReference>
<dbReference type="Pfam" id="PF00881">
    <property type="entry name" value="Nitroreductase"/>
    <property type="match status" value="1"/>
</dbReference>
<dbReference type="SUPFAM" id="SSF55469">
    <property type="entry name" value="FMN-dependent nitroreductase-like"/>
    <property type="match status" value="1"/>
</dbReference>
<keyword id="KW-0963">Cytoplasm</keyword>
<evidence type="ECO:0000305" key="1"/>
<comment type="function">
    <text>The actions of the proteins TfxB, TfxD and TfxF are implicated in the processing of the inactive trifolitoxin (TfxA) precursor into the active peptide.</text>
</comment>
<comment type="subcellular location">
    <subcellularLocation>
        <location evidence="1">Cytoplasm</location>
    </subcellularLocation>
</comment>
<comment type="similarity">
    <text evidence="1">To E.coli McbC which is involved in the processing of microcin B17 (MCCB17).</text>
</comment>
<organism>
    <name type="scientific">Rhizobium leguminosarum bv. trifolii</name>
    <dbReference type="NCBI Taxonomy" id="386"/>
    <lineage>
        <taxon>Bacteria</taxon>
        <taxon>Pseudomonadati</taxon>
        <taxon>Pseudomonadota</taxon>
        <taxon>Alphaproteobacteria</taxon>
        <taxon>Hyphomicrobiales</taxon>
        <taxon>Rhizobiaceae</taxon>
        <taxon>Rhizobium/Agrobacterium group</taxon>
        <taxon>Rhizobium</taxon>
    </lineage>
</organism>